<gene>
    <name type="primary">dnajc25</name>
</gene>
<dbReference type="EMBL" id="BC092126">
    <property type="protein sequence ID" value="AAH92126.1"/>
    <property type="molecule type" value="mRNA"/>
</dbReference>
<dbReference type="EMBL" id="BC093578">
    <property type="protein sequence ID" value="AAH93578.1"/>
    <property type="molecule type" value="mRNA"/>
</dbReference>
<dbReference type="SMR" id="Q58E03"/>
<dbReference type="AGR" id="Xenbase:XB-GENE-954367"/>
<dbReference type="Xenbase" id="XB-GENE-954367">
    <property type="gene designation" value="dnajc25.S"/>
</dbReference>
<dbReference type="Proteomes" id="UP000186698">
    <property type="component" value="Unplaced"/>
</dbReference>
<dbReference type="GO" id="GO:0005789">
    <property type="term" value="C:endoplasmic reticulum membrane"/>
    <property type="evidence" value="ECO:0000318"/>
    <property type="project" value="GO_Central"/>
</dbReference>
<dbReference type="GO" id="GO:0006457">
    <property type="term" value="P:protein folding"/>
    <property type="evidence" value="ECO:0000318"/>
    <property type="project" value="GO_Central"/>
</dbReference>
<dbReference type="CDD" id="cd06257">
    <property type="entry name" value="DnaJ"/>
    <property type="match status" value="1"/>
</dbReference>
<dbReference type="FunFam" id="1.10.287.110:FF:000036">
    <property type="entry name" value="dnaJ homolog subfamily C member 25"/>
    <property type="match status" value="1"/>
</dbReference>
<dbReference type="Gene3D" id="1.10.287.110">
    <property type="entry name" value="DnaJ domain"/>
    <property type="match status" value="1"/>
</dbReference>
<dbReference type="InterPro" id="IPR001623">
    <property type="entry name" value="DnaJ_domain"/>
</dbReference>
<dbReference type="InterPro" id="IPR018253">
    <property type="entry name" value="DnaJ_domain_CS"/>
</dbReference>
<dbReference type="InterPro" id="IPR044632">
    <property type="entry name" value="DNAJC25-like"/>
</dbReference>
<dbReference type="InterPro" id="IPR036869">
    <property type="entry name" value="J_dom_sf"/>
</dbReference>
<dbReference type="PANTHER" id="PTHR44176">
    <property type="entry name" value="DNAJ HOMOLOG SUBFAMILY C MEMBER 25"/>
    <property type="match status" value="1"/>
</dbReference>
<dbReference type="PANTHER" id="PTHR44176:SF1">
    <property type="entry name" value="DNAJ HOMOLOG SUBFAMILY C MEMBER 25"/>
    <property type="match status" value="1"/>
</dbReference>
<dbReference type="Pfam" id="PF00226">
    <property type="entry name" value="DnaJ"/>
    <property type="match status" value="1"/>
</dbReference>
<dbReference type="PRINTS" id="PR00625">
    <property type="entry name" value="JDOMAIN"/>
</dbReference>
<dbReference type="SMART" id="SM00271">
    <property type="entry name" value="DnaJ"/>
    <property type="match status" value="1"/>
</dbReference>
<dbReference type="SUPFAM" id="SSF46565">
    <property type="entry name" value="Chaperone J-domain"/>
    <property type="match status" value="1"/>
</dbReference>
<dbReference type="PROSITE" id="PS00636">
    <property type="entry name" value="DNAJ_1"/>
    <property type="match status" value="1"/>
</dbReference>
<dbReference type="PROSITE" id="PS50076">
    <property type="entry name" value="DNAJ_2"/>
    <property type="match status" value="1"/>
</dbReference>
<comment type="subcellular location">
    <subcellularLocation>
        <location evidence="3">Membrane</location>
        <topology evidence="3">Multi-pass membrane protein</topology>
    </subcellularLocation>
</comment>
<comment type="similarity">
    <text evidence="3">Belongs to the DNAJC25 family.</text>
</comment>
<organism>
    <name type="scientific">Xenopus laevis</name>
    <name type="common">African clawed frog</name>
    <dbReference type="NCBI Taxonomy" id="8355"/>
    <lineage>
        <taxon>Eukaryota</taxon>
        <taxon>Metazoa</taxon>
        <taxon>Chordata</taxon>
        <taxon>Craniata</taxon>
        <taxon>Vertebrata</taxon>
        <taxon>Euteleostomi</taxon>
        <taxon>Amphibia</taxon>
        <taxon>Batrachia</taxon>
        <taxon>Anura</taxon>
        <taxon>Pipoidea</taxon>
        <taxon>Pipidae</taxon>
        <taxon>Xenopodinae</taxon>
        <taxon>Xenopus</taxon>
        <taxon>Xenopus</taxon>
    </lineage>
</organism>
<proteinExistence type="evidence at transcript level"/>
<name>DJC25_XENLA</name>
<evidence type="ECO:0000255" key="1"/>
<evidence type="ECO:0000255" key="2">
    <source>
        <dbReference type="PROSITE-ProRule" id="PRU00286"/>
    </source>
</evidence>
<evidence type="ECO:0000305" key="3"/>
<feature type="chain" id="PRO_0000348572" description="DnaJ homolog subfamily C member 25">
    <location>
        <begin position="1"/>
        <end position="344"/>
    </location>
</feature>
<feature type="transmembrane region" description="Helical" evidence="1">
    <location>
        <begin position="5"/>
        <end position="25"/>
    </location>
</feature>
<feature type="transmembrane region" description="Helical" evidence="1">
    <location>
        <begin position="134"/>
        <end position="154"/>
    </location>
</feature>
<feature type="transmembrane region" description="Helical" evidence="1">
    <location>
        <begin position="228"/>
        <end position="248"/>
    </location>
</feature>
<feature type="domain" description="J" evidence="2">
    <location>
        <begin position="33"/>
        <end position="108"/>
    </location>
</feature>
<reference key="1">
    <citation type="submission" date="2005-03" db="EMBL/GenBank/DDBJ databases">
        <authorList>
            <consortium name="NIH - Xenopus Gene Collection (XGC) project"/>
        </authorList>
    </citation>
    <scope>NUCLEOTIDE SEQUENCE [LARGE SCALE MRNA]</scope>
    <source>
        <tissue>Eye</tissue>
    </source>
</reference>
<sequence>MQPRWVLLVALSVLFLSGRAGALTEGLYCGRQVCYDVLGVSRDANKGDIARAYRQLARKYHPDRYRPGDQLGPDGETRESAQEKFILVATAYETLKDEETRKDYDYMLDHPEEYYRHYYHYYSRRLAPKVDVRIVILVSVCAVSIFQYYSWWSSYNEAINYLATVTKYRIQAMEIAKQQGLLNRTKEKGKNRRSKEEIKSEEEEIIRDIIKNKIDIKGGYQKPQIFDILLFQIILFPYYMFKYISWYVRWIYTFNIQGKEYGEEEKLYLIRKYMKMSQSQFDTLEEHRKNTFLEQKLWIKENYEVYRQEQEEETKKKMASDPRWKRYRRWMKNEGPGRLTFADD</sequence>
<accession>Q58E03</accession>
<protein>
    <recommendedName>
        <fullName>DnaJ homolog subfamily C member 25</fullName>
    </recommendedName>
</protein>
<keyword id="KW-0143">Chaperone</keyword>
<keyword id="KW-0472">Membrane</keyword>
<keyword id="KW-1185">Reference proteome</keyword>
<keyword id="KW-0812">Transmembrane</keyword>
<keyword id="KW-1133">Transmembrane helix</keyword>